<reference key="1">
    <citation type="journal article" date="2000" name="Nature">
        <title>The genome sequence of the plant pathogen Xylella fastidiosa.</title>
        <authorList>
            <person name="Simpson A.J.G."/>
            <person name="Reinach F.C."/>
            <person name="Arruda P."/>
            <person name="Abreu F.A."/>
            <person name="Acencio M."/>
            <person name="Alvarenga R."/>
            <person name="Alves L.M.C."/>
            <person name="Araya J.E."/>
            <person name="Baia G.S."/>
            <person name="Baptista C.S."/>
            <person name="Barros M.H."/>
            <person name="Bonaccorsi E.D."/>
            <person name="Bordin S."/>
            <person name="Bove J.M."/>
            <person name="Briones M.R.S."/>
            <person name="Bueno M.R.P."/>
            <person name="Camargo A.A."/>
            <person name="Camargo L.E.A."/>
            <person name="Carraro D.M."/>
            <person name="Carrer H."/>
            <person name="Colauto N.B."/>
            <person name="Colombo C."/>
            <person name="Costa F.F."/>
            <person name="Costa M.C.R."/>
            <person name="Costa-Neto C.M."/>
            <person name="Coutinho L.L."/>
            <person name="Cristofani M."/>
            <person name="Dias-Neto E."/>
            <person name="Docena C."/>
            <person name="El-Dorry H."/>
            <person name="Facincani A.P."/>
            <person name="Ferreira A.J.S."/>
            <person name="Ferreira V.C.A."/>
            <person name="Ferro J.A."/>
            <person name="Fraga J.S."/>
            <person name="Franca S.C."/>
            <person name="Franco M.C."/>
            <person name="Frohme M."/>
            <person name="Furlan L.R."/>
            <person name="Garnier M."/>
            <person name="Goldman G.H."/>
            <person name="Goldman M.H.S."/>
            <person name="Gomes S.L."/>
            <person name="Gruber A."/>
            <person name="Ho P.L."/>
            <person name="Hoheisel J.D."/>
            <person name="Junqueira M.L."/>
            <person name="Kemper E.L."/>
            <person name="Kitajima J.P."/>
            <person name="Krieger J.E."/>
            <person name="Kuramae E.E."/>
            <person name="Laigret F."/>
            <person name="Lambais M.R."/>
            <person name="Leite L.C.C."/>
            <person name="Lemos E.G.M."/>
            <person name="Lemos M.V.F."/>
            <person name="Lopes S.A."/>
            <person name="Lopes C.R."/>
            <person name="Machado J.A."/>
            <person name="Machado M.A."/>
            <person name="Madeira A.M.B.N."/>
            <person name="Madeira H.M.F."/>
            <person name="Marino C.L."/>
            <person name="Marques M.V."/>
            <person name="Martins E.A.L."/>
            <person name="Martins E.M.F."/>
            <person name="Matsukuma A.Y."/>
            <person name="Menck C.F.M."/>
            <person name="Miracca E.C."/>
            <person name="Miyaki C.Y."/>
            <person name="Monteiro-Vitorello C.B."/>
            <person name="Moon D.H."/>
            <person name="Nagai M.A."/>
            <person name="Nascimento A.L.T.O."/>
            <person name="Netto L.E.S."/>
            <person name="Nhani A. Jr."/>
            <person name="Nobrega F.G."/>
            <person name="Nunes L.R."/>
            <person name="Oliveira M.A."/>
            <person name="de Oliveira M.C."/>
            <person name="de Oliveira R.C."/>
            <person name="Palmieri D.A."/>
            <person name="Paris A."/>
            <person name="Peixoto B.R."/>
            <person name="Pereira G.A.G."/>
            <person name="Pereira H.A. Jr."/>
            <person name="Pesquero J.B."/>
            <person name="Quaggio R.B."/>
            <person name="Roberto P.G."/>
            <person name="Rodrigues V."/>
            <person name="de Rosa A.J.M."/>
            <person name="de Rosa V.E. Jr."/>
            <person name="de Sa R.G."/>
            <person name="Santelli R.V."/>
            <person name="Sawasaki H.E."/>
            <person name="da Silva A.C.R."/>
            <person name="da Silva A.M."/>
            <person name="da Silva F.R."/>
            <person name="Silva W.A. Jr."/>
            <person name="da Silveira J.F."/>
            <person name="Silvestri M.L.Z."/>
            <person name="Siqueira W.J."/>
            <person name="de Souza A.A."/>
            <person name="de Souza A.P."/>
            <person name="Terenzi M.F."/>
            <person name="Truffi D."/>
            <person name="Tsai S.M."/>
            <person name="Tsuhako M.H."/>
            <person name="Vallada H."/>
            <person name="Van Sluys M.A."/>
            <person name="Verjovski-Almeida S."/>
            <person name="Vettore A.L."/>
            <person name="Zago M.A."/>
            <person name="Zatz M."/>
            <person name="Meidanis J."/>
            <person name="Setubal J.C."/>
        </authorList>
    </citation>
    <scope>NUCLEOTIDE SEQUENCE [LARGE SCALE GENOMIC DNA]</scope>
    <source>
        <strain>9a5c</strain>
    </source>
</reference>
<keyword id="KW-0067">ATP-binding</keyword>
<keyword id="KW-0143">Chaperone</keyword>
<keyword id="KW-0547">Nucleotide-binding</keyword>
<keyword id="KW-0597">Phosphoprotein</keyword>
<keyword id="KW-0346">Stress response</keyword>
<accession>Q9PB05</accession>
<proteinExistence type="inferred from homology"/>
<gene>
    <name type="primary">dnaK</name>
    <name type="ordered locus">XF_2340</name>
</gene>
<comment type="function">
    <text evidence="1">Acts as a chaperone.</text>
</comment>
<comment type="induction">
    <text evidence="1">By stress conditions e.g. heat shock (By similarity).</text>
</comment>
<comment type="similarity">
    <text evidence="3">Belongs to the heat shock protein 70 family.</text>
</comment>
<sequence>MGKIIGIDLGTTNSCLAIIEGGKGRVIENSEGDRTTPSIVAYTKDGEVLVGAAAKRQAVTNPKNTFYAVKRLIGRKFGDAEVQKDLDLVPYKITQHDNGDAWVATADAKKLAPQEISAKVLEKMKKTAEDFLGEKVTEAVITVPAYFNDSQRQATKDAGRIAGLDVKRIINEPTAAALAYGLDKKGGDRKIAVYDLGGGTFDVSIIEIAEVDGEKQFEVLATNGDTFLGGEDFDKRVIDYLVDEFNKDQGIDLRKDPLALQRLKDAAERAKIELSSSQQTEVNLPYITADASGPKHLNIKLTRAKLEALVDDLVRKSIEPCRIALNDAGLRTSDVQEVILVGGQTRMPKVQQAVADFFGKEPRKDVNPDEAVALGAAIQGGVLAGDVKDVLLLDVTPLSLGIETMGGVFTKIIEKNTTIPTKASQVFSTAEDGQSAVTVHVLQGEREQARFNKSLAKFDLAGIEPAPRGQPQIEVSFDIDANGILHVSAKDKKTNKEQKVEVKAGSGLSDSEIQQMVADAEAHREEDKKFQELVQARNHADGLIHSTRSAIKEHGSKVGGEVIGRVEASLAELEAAVKGDDKNQIEAKSKTLEEVAQSLHMAATAEQQSGSTGAGAGSSAKVDDVVDAEFTEVKGDKK</sequence>
<dbReference type="EMBL" id="AE003849">
    <property type="protein sequence ID" value="AAF85139.1"/>
    <property type="molecule type" value="Genomic_DNA"/>
</dbReference>
<dbReference type="PIR" id="G82570">
    <property type="entry name" value="G82570"/>
</dbReference>
<dbReference type="RefSeq" id="WP_010894786.1">
    <property type="nucleotide sequence ID" value="NC_002488.3"/>
</dbReference>
<dbReference type="SMR" id="Q9PB05"/>
<dbReference type="STRING" id="160492.XF_2340"/>
<dbReference type="KEGG" id="xfa:XF_2340"/>
<dbReference type="eggNOG" id="COG0443">
    <property type="taxonomic scope" value="Bacteria"/>
</dbReference>
<dbReference type="HOGENOM" id="CLU_005965_2_1_6"/>
<dbReference type="Proteomes" id="UP000000812">
    <property type="component" value="Chromosome"/>
</dbReference>
<dbReference type="GO" id="GO:0005524">
    <property type="term" value="F:ATP binding"/>
    <property type="evidence" value="ECO:0007669"/>
    <property type="project" value="UniProtKB-UniRule"/>
</dbReference>
<dbReference type="GO" id="GO:0140662">
    <property type="term" value="F:ATP-dependent protein folding chaperone"/>
    <property type="evidence" value="ECO:0007669"/>
    <property type="project" value="InterPro"/>
</dbReference>
<dbReference type="GO" id="GO:0051082">
    <property type="term" value="F:unfolded protein binding"/>
    <property type="evidence" value="ECO:0007669"/>
    <property type="project" value="InterPro"/>
</dbReference>
<dbReference type="CDD" id="cd10234">
    <property type="entry name" value="ASKHA_NBD_HSP70_DnaK-like"/>
    <property type="match status" value="1"/>
</dbReference>
<dbReference type="FunFam" id="2.60.34.10:FF:000014">
    <property type="entry name" value="Chaperone protein DnaK HSP70"/>
    <property type="match status" value="1"/>
</dbReference>
<dbReference type="FunFam" id="3.30.30.30:FF:000003">
    <property type="entry name" value="Heat shock protein 9"/>
    <property type="match status" value="1"/>
</dbReference>
<dbReference type="FunFam" id="1.20.1270.10:FF:000001">
    <property type="entry name" value="Molecular chaperone DnaK"/>
    <property type="match status" value="1"/>
</dbReference>
<dbReference type="FunFam" id="3.30.420.40:FF:000004">
    <property type="entry name" value="Molecular chaperone DnaK"/>
    <property type="match status" value="1"/>
</dbReference>
<dbReference type="FunFam" id="3.90.640.10:FF:000003">
    <property type="entry name" value="Molecular chaperone DnaK"/>
    <property type="match status" value="1"/>
</dbReference>
<dbReference type="Gene3D" id="1.20.1270.10">
    <property type="match status" value="1"/>
</dbReference>
<dbReference type="Gene3D" id="3.30.420.40">
    <property type="match status" value="2"/>
</dbReference>
<dbReference type="Gene3D" id="3.90.640.10">
    <property type="entry name" value="Actin, Chain A, domain 4"/>
    <property type="match status" value="1"/>
</dbReference>
<dbReference type="Gene3D" id="2.60.34.10">
    <property type="entry name" value="Substrate Binding Domain Of DNAk, Chain A, domain 1"/>
    <property type="match status" value="1"/>
</dbReference>
<dbReference type="HAMAP" id="MF_00332">
    <property type="entry name" value="DnaK"/>
    <property type="match status" value="1"/>
</dbReference>
<dbReference type="InterPro" id="IPR043129">
    <property type="entry name" value="ATPase_NBD"/>
</dbReference>
<dbReference type="InterPro" id="IPR012725">
    <property type="entry name" value="Chaperone_DnaK"/>
</dbReference>
<dbReference type="InterPro" id="IPR018181">
    <property type="entry name" value="Heat_shock_70_CS"/>
</dbReference>
<dbReference type="InterPro" id="IPR029048">
    <property type="entry name" value="HSP70_C_sf"/>
</dbReference>
<dbReference type="InterPro" id="IPR029047">
    <property type="entry name" value="HSP70_peptide-bd_sf"/>
</dbReference>
<dbReference type="InterPro" id="IPR013126">
    <property type="entry name" value="Hsp_70_fam"/>
</dbReference>
<dbReference type="NCBIfam" id="NF001413">
    <property type="entry name" value="PRK00290.1"/>
    <property type="match status" value="1"/>
</dbReference>
<dbReference type="NCBIfam" id="NF003520">
    <property type="entry name" value="PRK05183.1"/>
    <property type="match status" value="1"/>
</dbReference>
<dbReference type="NCBIfam" id="TIGR02350">
    <property type="entry name" value="prok_dnaK"/>
    <property type="match status" value="1"/>
</dbReference>
<dbReference type="PANTHER" id="PTHR19375">
    <property type="entry name" value="HEAT SHOCK PROTEIN 70KDA"/>
    <property type="match status" value="1"/>
</dbReference>
<dbReference type="Pfam" id="PF00012">
    <property type="entry name" value="HSP70"/>
    <property type="match status" value="1"/>
</dbReference>
<dbReference type="PRINTS" id="PR00301">
    <property type="entry name" value="HEATSHOCK70"/>
</dbReference>
<dbReference type="SUPFAM" id="SSF53067">
    <property type="entry name" value="Actin-like ATPase domain"/>
    <property type="match status" value="2"/>
</dbReference>
<dbReference type="SUPFAM" id="SSF100920">
    <property type="entry name" value="Heat shock protein 70kD (HSP70), peptide-binding domain"/>
    <property type="match status" value="1"/>
</dbReference>
<dbReference type="PROSITE" id="PS00297">
    <property type="entry name" value="HSP70_1"/>
    <property type="match status" value="1"/>
</dbReference>
<dbReference type="PROSITE" id="PS00329">
    <property type="entry name" value="HSP70_2"/>
    <property type="match status" value="1"/>
</dbReference>
<dbReference type="PROSITE" id="PS01036">
    <property type="entry name" value="HSP70_3"/>
    <property type="match status" value="1"/>
</dbReference>
<feature type="chain" id="PRO_0000078591" description="Chaperone protein DnaK">
    <location>
        <begin position="1"/>
        <end position="638"/>
    </location>
</feature>
<feature type="region of interest" description="Disordered" evidence="2">
    <location>
        <begin position="601"/>
        <end position="624"/>
    </location>
</feature>
<feature type="modified residue" description="Phosphothreonine; by autocatalysis" evidence="1">
    <location>
        <position position="200"/>
    </location>
</feature>
<evidence type="ECO:0000250" key="1"/>
<evidence type="ECO:0000256" key="2">
    <source>
        <dbReference type="SAM" id="MobiDB-lite"/>
    </source>
</evidence>
<evidence type="ECO:0000305" key="3"/>
<protein>
    <recommendedName>
        <fullName>Chaperone protein DnaK</fullName>
    </recommendedName>
    <alternativeName>
        <fullName>HSP70</fullName>
    </alternativeName>
    <alternativeName>
        <fullName>Heat shock 70 kDa protein</fullName>
    </alternativeName>
    <alternativeName>
        <fullName>Heat shock protein 70</fullName>
    </alternativeName>
</protein>
<name>DNAK_XYLFA</name>
<organism>
    <name type="scientific">Xylella fastidiosa (strain 9a5c)</name>
    <dbReference type="NCBI Taxonomy" id="160492"/>
    <lineage>
        <taxon>Bacteria</taxon>
        <taxon>Pseudomonadati</taxon>
        <taxon>Pseudomonadota</taxon>
        <taxon>Gammaproteobacteria</taxon>
        <taxon>Lysobacterales</taxon>
        <taxon>Lysobacteraceae</taxon>
        <taxon>Xylella</taxon>
    </lineage>
</organism>